<comment type="function">
    <text evidence="1">Catalyzes the hydrolysis of glutamine to glutamate and ammonia as part of the biosynthesis of pyridoxal 5'-phosphate. The resulting ammonia molecule is channeled to the active site of PdxS.</text>
</comment>
<comment type="catalytic activity">
    <reaction evidence="1">
        <text>aldehydo-D-ribose 5-phosphate + D-glyceraldehyde 3-phosphate + L-glutamine = pyridoxal 5'-phosphate + L-glutamate + phosphate + 3 H2O + H(+)</text>
        <dbReference type="Rhea" id="RHEA:31507"/>
        <dbReference type="ChEBI" id="CHEBI:15377"/>
        <dbReference type="ChEBI" id="CHEBI:15378"/>
        <dbReference type="ChEBI" id="CHEBI:29985"/>
        <dbReference type="ChEBI" id="CHEBI:43474"/>
        <dbReference type="ChEBI" id="CHEBI:58273"/>
        <dbReference type="ChEBI" id="CHEBI:58359"/>
        <dbReference type="ChEBI" id="CHEBI:59776"/>
        <dbReference type="ChEBI" id="CHEBI:597326"/>
        <dbReference type="EC" id="4.3.3.6"/>
    </reaction>
</comment>
<comment type="catalytic activity">
    <reaction evidence="1">
        <text>L-glutamine + H2O = L-glutamate + NH4(+)</text>
        <dbReference type="Rhea" id="RHEA:15889"/>
        <dbReference type="ChEBI" id="CHEBI:15377"/>
        <dbReference type="ChEBI" id="CHEBI:28938"/>
        <dbReference type="ChEBI" id="CHEBI:29985"/>
        <dbReference type="ChEBI" id="CHEBI:58359"/>
        <dbReference type="EC" id="3.5.1.2"/>
    </reaction>
</comment>
<comment type="pathway">
    <text evidence="1">Cofactor biosynthesis; pyridoxal 5'-phosphate biosynthesis.</text>
</comment>
<comment type="subunit">
    <text evidence="1">In the presence of PdxS, forms a dodecamer of heterodimers. Only shows activity in the heterodimer.</text>
</comment>
<comment type="similarity">
    <text evidence="1">Belongs to the glutaminase PdxT/SNO family.</text>
</comment>
<name>PDXT_HAEIE</name>
<sequence>MKIGILALQGAFAEHARMLEKLGIESVELRNLKNFQQHYSDLSGLILPGGESTAIGKLLRELYMLEPIKQAISSGFPVFGTCAGLILLAKEITSQKESHFGTMDIVVERNAYGRQLGSFYTEADCKGVGKIPMTFIRGPIISSVGKKVNILATVNNKIVAAQEKNMLVTSFHPELTNNLSLHKYFIDICKVA</sequence>
<proteinExistence type="inferred from homology"/>
<keyword id="KW-0315">Glutamine amidotransferase</keyword>
<keyword id="KW-0378">Hydrolase</keyword>
<keyword id="KW-0456">Lyase</keyword>
<keyword id="KW-0663">Pyridoxal phosphate</keyword>
<dbReference type="EC" id="4.3.3.6" evidence="1"/>
<dbReference type="EC" id="3.5.1.2" evidence="1"/>
<dbReference type="EMBL" id="CP000671">
    <property type="protein sequence ID" value="ABQ98182.1"/>
    <property type="molecule type" value="Genomic_DNA"/>
</dbReference>
<dbReference type="SMR" id="A5UBN1"/>
<dbReference type="MEROPS" id="C26.A32"/>
<dbReference type="KEGG" id="hip:CGSHiEE_03815"/>
<dbReference type="HOGENOM" id="CLU_069674_2_0_6"/>
<dbReference type="UniPathway" id="UPA00245"/>
<dbReference type="GO" id="GO:0005829">
    <property type="term" value="C:cytosol"/>
    <property type="evidence" value="ECO:0007669"/>
    <property type="project" value="TreeGrafter"/>
</dbReference>
<dbReference type="GO" id="GO:1903600">
    <property type="term" value="C:glutaminase complex"/>
    <property type="evidence" value="ECO:0007669"/>
    <property type="project" value="TreeGrafter"/>
</dbReference>
<dbReference type="GO" id="GO:0004359">
    <property type="term" value="F:glutaminase activity"/>
    <property type="evidence" value="ECO:0007669"/>
    <property type="project" value="UniProtKB-UniRule"/>
</dbReference>
<dbReference type="GO" id="GO:0036381">
    <property type="term" value="F:pyridoxal 5'-phosphate synthase (glutamine hydrolysing) activity"/>
    <property type="evidence" value="ECO:0007669"/>
    <property type="project" value="UniProtKB-UniRule"/>
</dbReference>
<dbReference type="GO" id="GO:0006543">
    <property type="term" value="P:glutamine catabolic process"/>
    <property type="evidence" value="ECO:0007669"/>
    <property type="project" value="UniProtKB-UniRule"/>
</dbReference>
<dbReference type="GO" id="GO:0042823">
    <property type="term" value="P:pyridoxal phosphate biosynthetic process"/>
    <property type="evidence" value="ECO:0007669"/>
    <property type="project" value="UniProtKB-UniRule"/>
</dbReference>
<dbReference type="GO" id="GO:0008614">
    <property type="term" value="P:pyridoxine metabolic process"/>
    <property type="evidence" value="ECO:0007669"/>
    <property type="project" value="TreeGrafter"/>
</dbReference>
<dbReference type="CDD" id="cd01749">
    <property type="entry name" value="GATase1_PB"/>
    <property type="match status" value="1"/>
</dbReference>
<dbReference type="FunFam" id="3.40.50.880:FF:000010">
    <property type="entry name" value="uncharacterized protein LOC100176842 isoform X2"/>
    <property type="match status" value="1"/>
</dbReference>
<dbReference type="Gene3D" id="3.40.50.880">
    <property type="match status" value="1"/>
</dbReference>
<dbReference type="HAMAP" id="MF_01615">
    <property type="entry name" value="PdxT"/>
    <property type="match status" value="1"/>
</dbReference>
<dbReference type="InterPro" id="IPR029062">
    <property type="entry name" value="Class_I_gatase-like"/>
</dbReference>
<dbReference type="InterPro" id="IPR002161">
    <property type="entry name" value="PdxT/SNO"/>
</dbReference>
<dbReference type="InterPro" id="IPR021196">
    <property type="entry name" value="PdxT/SNO_CS"/>
</dbReference>
<dbReference type="NCBIfam" id="TIGR03800">
    <property type="entry name" value="PLP_synth_Pdx2"/>
    <property type="match status" value="1"/>
</dbReference>
<dbReference type="PANTHER" id="PTHR31559">
    <property type="entry name" value="PYRIDOXAL 5'-PHOSPHATE SYNTHASE SUBUNIT SNO"/>
    <property type="match status" value="1"/>
</dbReference>
<dbReference type="PANTHER" id="PTHR31559:SF0">
    <property type="entry name" value="PYRIDOXAL 5'-PHOSPHATE SYNTHASE SUBUNIT SNO1-RELATED"/>
    <property type="match status" value="1"/>
</dbReference>
<dbReference type="Pfam" id="PF01174">
    <property type="entry name" value="SNO"/>
    <property type="match status" value="1"/>
</dbReference>
<dbReference type="PIRSF" id="PIRSF005639">
    <property type="entry name" value="Glut_amidoT_SNO"/>
    <property type="match status" value="1"/>
</dbReference>
<dbReference type="SUPFAM" id="SSF52317">
    <property type="entry name" value="Class I glutamine amidotransferase-like"/>
    <property type="match status" value="1"/>
</dbReference>
<dbReference type="PROSITE" id="PS01236">
    <property type="entry name" value="PDXT_SNO_1"/>
    <property type="match status" value="1"/>
</dbReference>
<dbReference type="PROSITE" id="PS51130">
    <property type="entry name" value="PDXT_SNO_2"/>
    <property type="match status" value="1"/>
</dbReference>
<protein>
    <recommendedName>
        <fullName evidence="1">Pyridoxal 5'-phosphate synthase subunit PdxT</fullName>
        <ecNumber evidence="1">4.3.3.6</ecNumber>
    </recommendedName>
    <alternativeName>
        <fullName evidence="1">Pdx2</fullName>
    </alternativeName>
    <alternativeName>
        <fullName evidence="1">Pyridoxal 5'-phosphate synthase glutaminase subunit</fullName>
        <ecNumber evidence="1">3.5.1.2</ecNumber>
    </alternativeName>
</protein>
<accession>A5UBN1</accession>
<feature type="chain" id="PRO_1000069461" description="Pyridoxal 5'-phosphate synthase subunit PdxT">
    <location>
        <begin position="1"/>
        <end position="192"/>
    </location>
</feature>
<feature type="active site" description="Nucleophile" evidence="1">
    <location>
        <position position="82"/>
    </location>
</feature>
<feature type="active site" description="Charge relay system" evidence="1">
    <location>
        <position position="172"/>
    </location>
</feature>
<feature type="active site" description="Charge relay system" evidence="1">
    <location>
        <position position="174"/>
    </location>
</feature>
<feature type="binding site" evidence="1">
    <location>
        <begin position="50"/>
        <end position="52"/>
    </location>
    <ligand>
        <name>L-glutamine</name>
        <dbReference type="ChEBI" id="CHEBI:58359"/>
    </ligand>
</feature>
<feature type="binding site" evidence="1">
    <location>
        <position position="109"/>
    </location>
    <ligand>
        <name>L-glutamine</name>
        <dbReference type="ChEBI" id="CHEBI:58359"/>
    </ligand>
</feature>
<feature type="binding site" evidence="1">
    <location>
        <begin position="136"/>
        <end position="137"/>
    </location>
    <ligand>
        <name>L-glutamine</name>
        <dbReference type="ChEBI" id="CHEBI:58359"/>
    </ligand>
</feature>
<organism>
    <name type="scientific">Haemophilus influenzae (strain PittEE)</name>
    <dbReference type="NCBI Taxonomy" id="374930"/>
    <lineage>
        <taxon>Bacteria</taxon>
        <taxon>Pseudomonadati</taxon>
        <taxon>Pseudomonadota</taxon>
        <taxon>Gammaproteobacteria</taxon>
        <taxon>Pasteurellales</taxon>
        <taxon>Pasteurellaceae</taxon>
        <taxon>Haemophilus</taxon>
    </lineage>
</organism>
<gene>
    <name evidence="1" type="primary">pdxT</name>
    <name type="ordered locus">CGSHiEE_03815</name>
</gene>
<reference key="1">
    <citation type="journal article" date="2007" name="Genome Biol.">
        <title>Characterization and modeling of the Haemophilus influenzae core and supragenomes based on the complete genomic sequences of Rd and 12 clinical nontypeable strains.</title>
        <authorList>
            <person name="Hogg J.S."/>
            <person name="Hu F.Z."/>
            <person name="Janto B."/>
            <person name="Boissy R."/>
            <person name="Hayes J."/>
            <person name="Keefe R."/>
            <person name="Post J.C."/>
            <person name="Ehrlich G.D."/>
        </authorList>
    </citation>
    <scope>NUCLEOTIDE SEQUENCE [LARGE SCALE GENOMIC DNA]</scope>
    <source>
        <strain>PittEE</strain>
    </source>
</reference>
<evidence type="ECO:0000255" key="1">
    <source>
        <dbReference type="HAMAP-Rule" id="MF_01615"/>
    </source>
</evidence>